<proteinExistence type="evidence at protein level"/>
<accession>Q8WY91</accession>
<accession>Q53NU7</accession>
<accession>Q6GRN0</accession>
<accession>Q6IPJ3</accession>
<accession>Q9NW26</accession>
<accession>Q9Y325</accession>
<keyword id="KW-0002">3D-structure</keyword>
<keyword id="KW-0025">Alternative splicing</keyword>
<keyword id="KW-0963">Cytoplasm</keyword>
<keyword id="KW-0238">DNA-binding</keyword>
<keyword id="KW-0349">Heme</keyword>
<keyword id="KW-0408">Iron</keyword>
<keyword id="KW-0413">Isomerase</keyword>
<keyword id="KW-0479">Metal-binding</keyword>
<keyword id="KW-0539">Nucleus</keyword>
<keyword id="KW-0597">Phosphoprotein</keyword>
<keyword id="KW-1267">Proteomics identification</keyword>
<keyword id="KW-1185">Reference proteome</keyword>
<keyword id="KW-0862">Zinc</keyword>
<keyword id="KW-0863">Zinc-finger</keyword>
<name>THAP4_HUMAN</name>
<sequence length="577" mass="62890">MVICCAAVNCSNRQGKGEKRAVSFHRFPLKDSKRLIQWLKAVQRDNWTPTKYSFLCSEHFTKDSFSKRLEDQHRLLKPTAVPSIFHLTEKKRGAGGHGRTRRKDASKATGGVRGHSSAATSRGAAGWSPSSSGNPMAKPESRRLKQAALQGEATPRAAQEAASQEQAQQALERTPGDGLATMVAGSQGKAEASATDAGDESATSSIEGGVTDKSGISMDDFTPPGSGACKFIGSLHSYSFSSKHTRERPSVPREPIDRKRLKKDVEPSCSGSSLGPDKGLAQSPPSSSLTATPQKPSQSPSAPPADVTPKPATEAVQSEHSDASPMSINEVILSASGACKLIDSLHSYCFSSRQNKSQVCCLREQVEKKNGELKSLRQRVSRSDSQVRKLQEKLDELRRVSVPYPSSLLSPSREPPKMNPVVEPLSWMLGTWLSDPPGAGTYPTLQPFQYLEEVHISHVGQPMLNFSFNSFHPDTRKPMHRECGFIRLKPDTNKVAFVSAQNTGVVEVEEGEVNGQELCIASHSIARISFAKEPHVEQITRKFRLNSEGKLEQTVSMATTTQPMTQHLHVTYKKVTP</sequence>
<evidence type="ECO:0000250" key="1">
    <source>
        <dbReference type="UniProtKB" id="Q8WTV1"/>
    </source>
</evidence>
<evidence type="ECO:0000255" key="2">
    <source>
        <dbReference type="PROSITE-ProRule" id="PRU00309"/>
    </source>
</evidence>
<evidence type="ECO:0000256" key="3">
    <source>
        <dbReference type="SAM" id="MobiDB-lite"/>
    </source>
</evidence>
<evidence type="ECO:0000269" key="4">
    <source>
    </source>
</evidence>
<evidence type="ECO:0000269" key="5">
    <source>
    </source>
</evidence>
<evidence type="ECO:0000269" key="6">
    <source>
    </source>
</evidence>
<evidence type="ECO:0000269" key="7">
    <source>
    </source>
</evidence>
<evidence type="ECO:0000269" key="8">
    <source>
    </source>
</evidence>
<evidence type="ECO:0000303" key="9">
    <source>
    </source>
</evidence>
<evidence type="ECO:0000303" key="10">
    <source>
    </source>
</evidence>
<evidence type="ECO:0000305" key="11"/>
<evidence type="ECO:0000305" key="12">
    <source>
    </source>
</evidence>
<evidence type="ECO:0000305" key="13">
    <source>
    </source>
</evidence>
<evidence type="ECO:0000312" key="14">
    <source>
        <dbReference type="HGNC" id="HGNC:23187"/>
    </source>
</evidence>
<evidence type="ECO:0007744" key="15">
    <source>
        <dbReference type="PDB" id="3IA8"/>
    </source>
</evidence>
<evidence type="ECO:0007744" key="16">
    <source>
    </source>
</evidence>
<evidence type="ECO:0007744" key="17">
    <source>
    </source>
</evidence>
<evidence type="ECO:0007829" key="18">
    <source>
        <dbReference type="PDB" id="3IA8"/>
    </source>
</evidence>
<reference key="1">
    <citation type="journal article" date="2000" name="Genome Res.">
        <title>Identification of novel human genes evolutionarily conserved in Caenorhabditis elegans by comparative proteomics.</title>
        <authorList>
            <person name="Lai C.-H."/>
            <person name="Chou C.-Y."/>
            <person name="Ch'ang L.-Y."/>
            <person name="Liu C.-S."/>
            <person name="Lin W.-C."/>
        </authorList>
    </citation>
    <scope>NUCLEOTIDE SEQUENCE [LARGE SCALE MRNA] (ISOFORM 2)</scope>
</reference>
<reference key="2">
    <citation type="journal article" date="2004" name="Proc. Natl. Acad. Sci. U.S.A.">
        <title>Large-scale cDNA transfection screening for genes related to cancer development and progression.</title>
        <authorList>
            <person name="Wan D."/>
            <person name="Gong Y."/>
            <person name="Qin W."/>
            <person name="Zhang P."/>
            <person name="Li J."/>
            <person name="Wei L."/>
            <person name="Zhou X."/>
            <person name="Li H."/>
            <person name="Qiu X."/>
            <person name="Zhong F."/>
            <person name="He L."/>
            <person name="Yu J."/>
            <person name="Yao G."/>
            <person name="Jiang H."/>
            <person name="Qian L."/>
            <person name="Yu Y."/>
            <person name="Shu H."/>
            <person name="Chen X."/>
            <person name="Xu H."/>
            <person name="Guo M."/>
            <person name="Pan Z."/>
            <person name="Chen Y."/>
            <person name="Ge C."/>
            <person name="Yang S."/>
            <person name="Gu J."/>
        </authorList>
    </citation>
    <scope>NUCLEOTIDE SEQUENCE [LARGE SCALE MRNA] (ISOFORM 1)</scope>
    <scope>VARIANT GLY-121</scope>
</reference>
<reference key="3">
    <citation type="journal article" date="2005" name="Nature">
        <title>Generation and annotation of the DNA sequences of human chromosomes 2 and 4.</title>
        <authorList>
            <person name="Hillier L.W."/>
            <person name="Graves T.A."/>
            <person name="Fulton R.S."/>
            <person name="Fulton L.A."/>
            <person name="Pepin K.H."/>
            <person name="Minx P."/>
            <person name="Wagner-McPherson C."/>
            <person name="Layman D."/>
            <person name="Wylie K."/>
            <person name="Sekhon M."/>
            <person name="Becker M.C."/>
            <person name="Fewell G.A."/>
            <person name="Delehaunty K.D."/>
            <person name="Miner T.L."/>
            <person name="Nash W.E."/>
            <person name="Kremitzki C."/>
            <person name="Oddy L."/>
            <person name="Du H."/>
            <person name="Sun H."/>
            <person name="Bradshaw-Cordum H."/>
            <person name="Ali J."/>
            <person name="Carter J."/>
            <person name="Cordes M."/>
            <person name="Harris A."/>
            <person name="Isak A."/>
            <person name="van Brunt A."/>
            <person name="Nguyen C."/>
            <person name="Du F."/>
            <person name="Courtney L."/>
            <person name="Kalicki J."/>
            <person name="Ozersky P."/>
            <person name="Abbott S."/>
            <person name="Armstrong J."/>
            <person name="Belter E.A."/>
            <person name="Caruso L."/>
            <person name="Cedroni M."/>
            <person name="Cotton M."/>
            <person name="Davidson T."/>
            <person name="Desai A."/>
            <person name="Elliott G."/>
            <person name="Erb T."/>
            <person name="Fronick C."/>
            <person name="Gaige T."/>
            <person name="Haakenson W."/>
            <person name="Haglund K."/>
            <person name="Holmes A."/>
            <person name="Harkins R."/>
            <person name="Kim K."/>
            <person name="Kruchowski S.S."/>
            <person name="Strong C.M."/>
            <person name="Grewal N."/>
            <person name="Goyea E."/>
            <person name="Hou S."/>
            <person name="Levy A."/>
            <person name="Martinka S."/>
            <person name="Mead K."/>
            <person name="McLellan M.D."/>
            <person name="Meyer R."/>
            <person name="Randall-Maher J."/>
            <person name="Tomlinson C."/>
            <person name="Dauphin-Kohlberg S."/>
            <person name="Kozlowicz-Reilly A."/>
            <person name="Shah N."/>
            <person name="Swearengen-Shahid S."/>
            <person name="Snider J."/>
            <person name="Strong J.T."/>
            <person name="Thompson J."/>
            <person name="Yoakum M."/>
            <person name="Leonard S."/>
            <person name="Pearman C."/>
            <person name="Trani L."/>
            <person name="Radionenko M."/>
            <person name="Waligorski J.E."/>
            <person name="Wang C."/>
            <person name="Rock S.M."/>
            <person name="Tin-Wollam A.-M."/>
            <person name="Maupin R."/>
            <person name="Latreille P."/>
            <person name="Wendl M.C."/>
            <person name="Yang S.-P."/>
            <person name="Pohl C."/>
            <person name="Wallis J.W."/>
            <person name="Spieth J."/>
            <person name="Bieri T.A."/>
            <person name="Berkowicz N."/>
            <person name="Nelson J.O."/>
            <person name="Osborne J."/>
            <person name="Ding L."/>
            <person name="Meyer R."/>
            <person name="Sabo A."/>
            <person name="Shotland Y."/>
            <person name="Sinha P."/>
            <person name="Wohldmann P.E."/>
            <person name="Cook L.L."/>
            <person name="Hickenbotham M.T."/>
            <person name="Eldred J."/>
            <person name="Williams D."/>
            <person name="Jones T.A."/>
            <person name="She X."/>
            <person name="Ciccarelli F.D."/>
            <person name="Izaurralde E."/>
            <person name="Taylor J."/>
            <person name="Schmutz J."/>
            <person name="Myers R.M."/>
            <person name="Cox D.R."/>
            <person name="Huang X."/>
            <person name="McPherson J.D."/>
            <person name="Mardis E.R."/>
            <person name="Clifton S.W."/>
            <person name="Warren W.C."/>
            <person name="Chinwalla A.T."/>
            <person name="Eddy S.R."/>
            <person name="Marra M.A."/>
            <person name="Ovcharenko I."/>
            <person name="Furey T.S."/>
            <person name="Miller W."/>
            <person name="Eichler E.E."/>
            <person name="Bork P."/>
            <person name="Suyama M."/>
            <person name="Torrents D."/>
            <person name="Waterston R.H."/>
            <person name="Wilson R.K."/>
        </authorList>
    </citation>
    <scope>NUCLEOTIDE SEQUENCE [LARGE SCALE GENOMIC DNA]</scope>
</reference>
<reference key="4">
    <citation type="journal article" date="2004" name="Genome Res.">
        <title>The status, quality, and expansion of the NIH full-length cDNA project: the Mammalian Gene Collection (MGC).</title>
        <authorList>
            <consortium name="The MGC Project Team"/>
        </authorList>
    </citation>
    <scope>NUCLEOTIDE SEQUENCE [LARGE SCALE MRNA] (ISOFORM 1)</scope>
    <scope>VARIANT GLY-121</scope>
    <source>
        <tissue>Brain</tissue>
        <tissue>Eye</tissue>
        <tissue>Melanoma</tissue>
        <tissue>Ovarian carcinoma</tissue>
    </source>
</reference>
<reference key="5">
    <citation type="journal article" date="2004" name="Nat. Genet.">
        <title>Complete sequencing and characterization of 21,243 full-length human cDNAs.</title>
        <authorList>
            <person name="Ota T."/>
            <person name="Suzuki Y."/>
            <person name="Nishikawa T."/>
            <person name="Otsuki T."/>
            <person name="Sugiyama T."/>
            <person name="Irie R."/>
            <person name="Wakamatsu A."/>
            <person name="Hayashi K."/>
            <person name="Sato H."/>
            <person name="Nagai K."/>
            <person name="Kimura K."/>
            <person name="Makita H."/>
            <person name="Sekine M."/>
            <person name="Obayashi M."/>
            <person name="Nishi T."/>
            <person name="Shibahara T."/>
            <person name="Tanaka T."/>
            <person name="Ishii S."/>
            <person name="Yamamoto J."/>
            <person name="Saito K."/>
            <person name="Kawai Y."/>
            <person name="Isono Y."/>
            <person name="Nakamura Y."/>
            <person name="Nagahari K."/>
            <person name="Murakami K."/>
            <person name="Yasuda T."/>
            <person name="Iwayanagi T."/>
            <person name="Wagatsuma M."/>
            <person name="Shiratori A."/>
            <person name="Sudo H."/>
            <person name="Hosoiri T."/>
            <person name="Kaku Y."/>
            <person name="Kodaira H."/>
            <person name="Kondo H."/>
            <person name="Sugawara M."/>
            <person name="Takahashi M."/>
            <person name="Kanda K."/>
            <person name="Yokoi T."/>
            <person name="Furuya T."/>
            <person name="Kikkawa E."/>
            <person name="Omura Y."/>
            <person name="Abe K."/>
            <person name="Kamihara K."/>
            <person name="Katsuta N."/>
            <person name="Sato K."/>
            <person name="Tanikawa M."/>
            <person name="Yamazaki M."/>
            <person name="Ninomiya K."/>
            <person name="Ishibashi T."/>
            <person name="Yamashita H."/>
            <person name="Murakawa K."/>
            <person name="Fujimori K."/>
            <person name="Tanai H."/>
            <person name="Kimata M."/>
            <person name="Watanabe M."/>
            <person name="Hiraoka S."/>
            <person name="Chiba Y."/>
            <person name="Ishida S."/>
            <person name="Ono Y."/>
            <person name="Takiguchi S."/>
            <person name="Watanabe S."/>
            <person name="Yosida M."/>
            <person name="Hotuta T."/>
            <person name="Kusano J."/>
            <person name="Kanehori K."/>
            <person name="Takahashi-Fujii A."/>
            <person name="Hara H."/>
            <person name="Tanase T.-O."/>
            <person name="Nomura Y."/>
            <person name="Togiya S."/>
            <person name="Komai F."/>
            <person name="Hara R."/>
            <person name="Takeuchi K."/>
            <person name="Arita M."/>
            <person name="Imose N."/>
            <person name="Musashino K."/>
            <person name="Yuuki H."/>
            <person name="Oshima A."/>
            <person name="Sasaki N."/>
            <person name="Aotsuka S."/>
            <person name="Yoshikawa Y."/>
            <person name="Matsunawa H."/>
            <person name="Ichihara T."/>
            <person name="Shiohata N."/>
            <person name="Sano S."/>
            <person name="Moriya S."/>
            <person name="Momiyama H."/>
            <person name="Satoh N."/>
            <person name="Takami S."/>
            <person name="Terashima Y."/>
            <person name="Suzuki O."/>
            <person name="Nakagawa S."/>
            <person name="Senoh A."/>
            <person name="Mizoguchi H."/>
            <person name="Goto Y."/>
            <person name="Shimizu F."/>
            <person name="Wakebe H."/>
            <person name="Hishigaki H."/>
            <person name="Watanabe T."/>
            <person name="Sugiyama A."/>
            <person name="Takemoto M."/>
            <person name="Kawakami B."/>
            <person name="Yamazaki M."/>
            <person name="Watanabe K."/>
            <person name="Kumagai A."/>
            <person name="Itakura S."/>
            <person name="Fukuzumi Y."/>
            <person name="Fujimori Y."/>
            <person name="Komiyama M."/>
            <person name="Tashiro H."/>
            <person name="Tanigami A."/>
            <person name="Fujiwara T."/>
            <person name="Ono T."/>
            <person name="Yamada K."/>
            <person name="Fujii Y."/>
            <person name="Ozaki K."/>
            <person name="Hirao M."/>
            <person name="Ohmori Y."/>
            <person name="Kawabata A."/>
            <person name="Hikiji T."/>
            <person name="Kobatake N."/>
            <person name="Inagaki H."/>
            <person name="Ikema Y."/>
            <person name="Okamoto S."/>
            <person name="Okitani R."/>
            <person name="Kawakami T."/>
            <person name="Noguchi S."/>
            <person name="Itoh T."/>
            <person name="Shigeta K."/>
            <person name="Senba T."/>
            <person name="Matsumura K."/>
            <person name="Nakajima Y."/>
            <person name="Mizuno T."/>
            <person name="Morinaga M."/>
            <person name="Sasaki M."/>
            <person name="Togashi T."/>
            <person name="Oyama M."/>
            <person name="Hata H."/>
            <person name="Watanabe M."/>
            <person name="Komatsu T."/>
            <person name="Mizushima-Sugano J."/>
            <person name="Satoh T."/>
            <person name="Shirai Y."/>
            <person name="Takahashi Y."/>
            <person name="Nakagawa K."/>
            <person name="Okumura K."/>
            <person name="Nagase T."/>
            <person name="Nomura N."/>
            <person name="Kikuchi H."/>
            <person name="Masuho Y."/>
            <person name="Yamashita R."/>
            <person name="Nakai K."/>
            <person name="Yada T."/>
            <person name="Nakamura Y."/>
            <person name="Ohara O."/>
            <person name="Isogai T."/>
            <person name="Sugano S."/>
        </authorList>
    </citation>
    <scope>NUCLEOTIDE SEQUENCE [LARGE SCALE MRNA] OF 221-577 (ISOFORM 1)</scope>
</reference>
<reference key="6">
    <citation type="journal article" date="2007" name="Science">
        <title>ATM and ATR substrate analysis reveals extensive protein networks responsive to DNA damage.</title>
        <authorList>
            <person name="Matsuoka S."/>
            <person name="Ballif B.A."/>
            <person name="Smogorzewska A."/>
            <person name="McDonald E.R. III"/>
            <person name="Hurov K.E."/>
            <person name="Luo J."/>
            <person name="Bakalarski C.E."/>
            <person name="Zhao Z."/>
            <person name="Solimini N."/>
            <person name="Lerenthal Y."/>
            <person name="Shiloh Y."/>
            <person name="Gygi S.P."/>
            <person name="Elledge S.J."/>
        </authorList>
    </citation>
    <scope>PHOSPHORYLATION [LARGE SCALE ANALYSIS] AT SER-163</scope>
    <scope>IDENTIFICATION BY MASS SPECTROMETRY [LARGE SCALE ANALYSIS]</scope>
    <source>
        <tissue>Embryonic kidney</tissue>
    </source>
</reference>
<reference key="7">
    <citation type="journal article" date="2013" name="J. Proteome Res.">
        <title>Toward a comprehensive characterization of a human cancer cell phosphoproteome.</title>
        <authorList>
            <person name="Zhou H."/>
            <person name="Di Palma S."/>
            <person name="Preisinger C."/>
            <person name="Peng M."/>
            <person name="Polat A.N."/>
            <person name="Heck A.J."/>
            <person name="Mohammed S."/>
        </authorList>
    </citation>
    <scope>PHOSPHORYLATION [LARGE SCALE ANALYSIS] AT SER-239</scope>
    <scope>IDENTIFICATION BY MASS SPECTROMETRY [LARGE SCALE ANALYSIS]</scope>
    <source>
        <tissue>Erythroleukemia</tissue>
    </source>
</reference>
<reference key="8">
    <citation type="journal article" date="2018" name="FEBS Open Bio">
        <title>Human nitrobindin: the first example of an all-beta-barrel ferric heme-protein that catalyzes peroxynitrite detoxification.</title>
        <authorList>
            <person name="De Simone G."/>
            <person name="di Masi A."/>
            <person name="Polticelli F."/>
            <person name="Ascenzi P."/>
        </authorList>
    </citation>
    <scope>FUNCTION</scope>
    <scope>CATALYTIC ACTIVITY</scope>
    <scope>PATHWAY</scope>
    <scope>DOMAIN</scope>
</reference>
<reference key="9">
    <citation type="journal article" date="2020" name="Antioxid. Redox Signal.">
        <title>Mycobacterial and Human Nitrobindins: Structure and Function.</title>
        <authorList>
            <person name="De Simone G."/>
            <person name="di Masi A."/>
            <person name="Vita G.M."/>
            <person name="Polticelli F."/>
            <person name="Pesce A."/>
            <person name="Nardini M."/>
            <person name="Bolognesi M."/>
            <person name="Ciaccio C."/>
            <person name="Coletta M."/>
            <person name="Turilli E.S."/>
            <person name="Fasano M."/>
            <person name="Tognaccini L."/>
            <person name="Smulevich G."/>
            <person name="Abbruzzetti S."/>
            <person name="Viappiani C."/>
            <person name="Bruno S."/>
            <person name="Ascenzi P."/>
        </authorList>
    </citation>
    <scope>FUNCTION</scope>
    <scope>COFACTOR</scope>
    <scope>NO-BINDING</scope>
</reference>
<reference key="10">
    <citation type="journal article" date="2011" name="Proteins">
        <title>Structure of the C-terminal heme-binding domain of THAP domain containing protein 4 from Homo sapiens.</title>
        <authorList>
            <person name="Bianchetti C.M."/>
            <person name="Bingman C.A."/>
            <person name="Phillips G.N. Jr."/>
        </authorList>
    </citation>
    <scope>X-RAY CRYSTALLOGRAPHY (1.79 ANGSTROMS) OF 415-577 IN COMPLEX WITH HEME</scope>
    <scope>COFACTOR</scope>
    <scope>SUBUNIT</scope>
    <scope>DOMAIN</scope>
</reference>
<feature type="chain" id="PRO_0000068646" description="Peroxynitrite isomerase THAP4">
    <location>
        <begin position="1"/>
        <end position="577"/>
    </location>
</feature>
<feature type="zinc finger region" description="THAP-type" evidence="2">
    <location>
        <begin position="1"/>
        <end position="85"/>
    </location>
</feature>
<feature type="region of interest" description="Disordered" evidence="3">
    <location>
        <begin position="84"/>
        <end position="221"/>
    </location>
</feature>
<feature type="region of interest" description="Disordered" evidence="3">
    <location>
        <begin position="240"/>
        <end position="324"/>
    </location>
</feature>
<feature type="region of interest" description="Nitrobindin" evidence="6 7">
    <location>
        <begin position="415"/>
        <end position="577"/>
    </location>
</feature>
<feature type="short sequence motif" description="HCFC1-binding motif (HBM)" evidence="1">
    <location>
        <begin position="235"/>
        <end position="238"/>
    </location>
</feature>
<feature type="compositionally biased region" description="Low complexity" evidence="3">
    <location>
        <begin position="157"/>
        <end position="170"/>
    </location>
</feature>
<feature type="compositionally biased region" description="Basic and acidic residues" evidence="3">
    <location>
        <begin position="247"/>
        <end position="266"/>
    </location>
</feature>
<feature type="compositionally biased region" description="Low complexity" evidence="3">
    <location>
        <begin position="290"/>
        <end position="300"/>
    </location>
</feature>
<feature type="binding site" evidence="6 15">
    <location>
        <position position="444"/>
    </location>
    <ligand>
        <name>heme b</name>
        <dbReference type="ChEBI" id="CHEBI:60344"/>
    </ligand>
</feature>
<feature type="binding site" description="axial binding residue" evidence="6 15">
    <location>
        <position position="567"/>
    </location>
    <ligand>
        <name>heme b</name>
        <dbReference type="ChEBI" id="CHEBI:60344"/>
    </ligand>
    <ligandPart>
        <name>Fe</name>
        <dbReference type="ChEBI" id="CHEBI:18248"/>
    </ligandPart>
</feature>
<feature type="modified residue" description="Phosphoserine" evidence="16">
    <location>
        <position position="163"/>
    </location>
</feature>
<feature type="modified residue" description="Phosphoserine" evidence="17">
    <location>
        <position position="239"/>
    </location>
</feature>
<feature type="splice variant" id="VSP_020078" description="In isoform 2." evidence="9">
    <location>
        <begin position="1"/>
        <end position="412"/>
    </location>
</feature>
<feature type="splice variant" id="VSP_020079" description="In isoform 2." evidence="9">
    <original>R</original>
    <variation>M</variation>
    <location>
        <position position="413"/>
    </location>
</feature>
<feature type="sequence variant" id="VAR_027161" description="In dbSNP:rs7424328." evidence="4 5">
    <original>S</original>
    <variation>G</variation>
    <location>
        <position position="121"/>
    </location>
</feature>
<feature type="sequence conflict" description="In Ref. 5; BAA91560." evidence="11" ref="5">
    <original>L</original>
    <variation>P</variation>
    <location>
        <position position="261"/>
    </location>
</feature>
<feature type="helix" evidence="18">
    <location>
        <begin position="420"/>
        <end position="428"/>
    </location>
</feature>
<feature type="strand" evidence="18">
    <location>
        <begin position="430"/>
        <end position="436"/>
    </location>
</feature>
<feature type="strand" evidence="18">
    <location>
        <begin position="438"/>
        <end position="442"/>
    </location>
</feature>
<feature type="strand" evidence="18">
    <location>
        <begin position="445"/>
        <end position="457"/>
    </location>
</feature>
<feature type="strand" evidence="18">
    <location>
        <begin position="459"/>
        <end position="471"/>
    </location>
</feature>
<feature type="turn" evidence="18">
    <location>
        <begin position="473"/>
        <end position="475"/>
    </location>
</feature>
<feature type="strand" evidence="18">
    <location>
        <begin position="478"/>
        <end position="488"/>
    </location>
</feature>
<feature type="strand" evidence="18">
    <location>
        <begin position="494"/>
        <end position="501"/>
    </location>
</feature>
<feature type="turn" evidence="18">
    <location>
        <begin position="502"/>
        <end position="504"/>
    </location>
</feature>
<feature type="strand" evidence="18">
    <location>
        <begin position="505"/>
        <end position="514"/>
    </location>
</feature>
<feature type="strand" evidence="18">
    <location>
        <begin position="517"/>
        <end position="527"/>
    </location>
</feature>
<feature type="strand" evidence="18">
    <location>
        <begin position="536"/>
        <end position="545"/>
    </location>
</feature>
<feature type="strand" evidence="18">
    <location>
        <begin position="551"/>
        <end position="559"/>
    </location>
</feature>
<feature type="strand" evidence="18">
    <location>
        <begin position="562"/>
        <end position="576"/>
    </location>
</feature>
<dbReference type="EC" id="5.99.-.-" evidence="7"/>
<dbReference type="EMBL" id="AF132970">
    <property type="protein sequence ID" value="AAD27745.1"/>
    <property type="molecule type" value="mRNA"/>
</dbReference>
<dbReference type="EMBL" id="AF258556">
    <property type="protein sequence ID" value="AAG23759.1"/>
    <property type="molecule type" value="mRNA"/>
</dbReference>
<dbReference type="EMBL" id="AC133528">
    <property type="protein sequence ID" value="AAY14918.1"/>
    <property type="molecule type" value="Genomic_DNA"/>
</dbReference>
<dbReference type="EMBL" id="BC000247">
    <property type="protein sequence ID" value="AAH00247.1"/>
    <property type="status" value="ALT_INIT"/>
    <property type="molecule type" value="mRNA"/>
</dbReference>
<dbReference type="EMBL" id="BC009439">
    <property type="protein sequence ID" value="AAH09439.1"/>
    <property type="status" value="ALT_INIT"/>
    <property type="molecule type" value="mRNA"/>
</dbReference>
<dbReference type="EMBL" id="BC069235">
    <property type="protein sequence ID" value="AAH69235.1"/>
    <property type="molecule type" value="mRNA"/>
</dbReference>
<dbReference type="EMBL" id="BC071896">
    <property type="protein sequence ID" value="AAH71896.1"/>
    <property type="molecule type" value="mRNA"/>
</dbReference>
<dbReference type="EMBL" id="BC094822">
    <property type="protein sequence ID" value="AAH94822.1"/>
    <property type="molecule type" value="mRNA"/>
</dbReference>
<dbReference type="EMBL" id="AK001216">
    <property type="protein sequence ID" value="BAA91560.1"/>
    <property type="status" value="ALT_INIT"/>
    <property type="molecule type" value="mRNA"/>
</dbReference>
<dbReference type="CCDS" id="CCDS2551.1">
    <molecule id="Q8WY91-1"/>
</dbReference>
<dbReference type="CCDS" id="CCDS54440.1">
    <molecule id="Q8WY91-2"/>
</dbReference>
<dbReference type="RefSeq" id="NP_001157828.1">
    <molecule id="Q8WY91-2"/>
    <property type="nucleotide sequence ID" value="NM_001164356.2"/>
</dbReference>
<dbReference type="RefSeq" id="NP_057047.4">
    <molecule id="Q8WY91-1"/>
    <property type="nucleotide sequence ID" value="NM_015963.5"/>
</dbReference>
<dbReference type="PDB" id="3IA8">
    <property type="method" value="X-ray"/>
    <property type="resolution" value="1.79 A"/>
    <property type="chains" value="A/B=415-577"/>
</dbReference>
<dbReference type="PDBsum" id="3IA8"/>
<dbReference type="SMR" id="Q8WY91"/>
<dbReference type="BioGRID" id="119269">
    <property type="interactions" value="80"/>
</dbReference>
<dbReference type="FunCoup" id="Q8WY91">
    <property type="interactions" value="298"/>
</dbReference>
<dbReference type="IntAct" id="Q8WY91">
    <property type="interactions" value="69"/>
</dbReference>
<dbReference type="MINT" id="Q8WY91"/>
<dbReference type="STRING" id="9606.ENSP00000385006"/>
<dbReference type="iPTMnet" id="Q8WY91"/>
<dbReference type="PhosphoSitePlus" id="Q8WY91"/>
<dbReference type="BioMuta" id="THAP4"/>
<dbReference type="DMDM" id="29839589"/>
<dbReference type="jPOST" id="Q8WY91"/>
<dbReference type="MassIVE" id="Q8WY91"/>
<dbReference type="PaxDb" id="9606-ENSP00000385006"/>
<dbReference type="PeptideAtlas" id="Q8WY91"/>
<dbReference type="ProteomicsDB" id="75134">
    <molecule id="Q8WY91-1"/>
</dbReference>
<dbReference type="ProteomicsDB" id="75135">
    <molecule id="Q8WY91-2"/>
</dbReference>
<dbReference type="Pumba" id="Q8WY91"/>
<dbReference type="Antibodypedia" id="34568">
    <property type="antibodies" value="77 antibodies from 23 providers"/>
</dbReference>
<dbReference type="DNASU" id="51078"/>
<dbReference type="Ensembl" id="ENST00000402136.5">
    <molecule id="Q8WY91-2"/>
    <property type="protein sequence ID" value="ENSP00000385931.1"/>
    <property type="gene ID" value="ENSG00000176946.13"/>
</dbReference>
<dbReference type="Ensembl" id="ENST00000407315.6">
    <molecule id="Q8WY91-1"/>
    <property type="protein sequence ID" value="ENSP00000385006.1"/>
    <property type="gene ID" value="ENSG00000176946.13"/>
</dbReference>
<dbReference type="GeneID" id="51078"/>
<dbReference type="KEGG" id="hsa:51078"/>
<dbReference type="MANE-Select" id="ENST00000407315.6">
    <property type="protein sequence ID" value="ENSP00000385006.1"/>
    <property type="RefSeq nucleotide sequence ID" value="NM_015963.6"/>
    <property type="RefSeq protein sequence ID" value="NP_057047.4"/>
</dbReference>
<dbReference type="UCSC" id="uc002wbs.3">
    <molecule id="Q8WY91-1"/>
    <property type="organism name" value="human"/>
</dbReference>
<dbReference type="AGR" id="HGNC:23187"/>
<dbReference type="CTD" id="51078"/>
<dbReference type="DisGeNET" id="51078"/>
<dbReference type="GeneCards" id="THAP4"/>
<dbReference type="HGNC" id="HGNC:23187">
    <property type="gene designation" value="THAP4"/>
</dbReference>
<dbReference type="HPA" id="ENSG00000176946">
    <property type="expression patterns" value="Low tissue specificity"/>
</dbReference>
<dbReference type="MIM" id="612533">
    <property type="type" value="gene"/>
</dbReference>
<dbReference type="neXtProt" id="NX_Q8WY91"/>
<dbReference type="OpenTargets" id="ENSG00000176946"/>
<dbReference type="PharmGKB" id="PA134864723"/>
<dbReference type="VEuPathDB" id="HostDB:ENSG00000176946"/>
<dbReference type="eggNOG" id="KOG3371">
    <property type="taxonomic scope" value="Eukaryota"/>
</dbReference>
<dbReference type="GeneTree" id="ENSGT00940000158447"/>
<dbReference type="HOGENOM" id="CLU_085483_1_1_1"/>
<dbReference type="InParanoid" id="Q8WY91"/>
<dbReference type="OrthoDB" id="58529at2759"/>
<dbReference type="PAN-GO" id="Q8WY91">
    <property type="GO annotations" value="0 GO annotations based on evolutionary models"/>
</dbReference>
<dbReference type="PhylomeDB" id="Q8WY91"/>
<dbReference type="TreeFam" id="TF315956"/>
<dbReference type="PathwayCommons" id="Q8WY91"/>
<dbReference type="SignaLink" id="Q8WY91"/>
<dbReference type="BioGRID-ORCS" id="51078">
    <property type="hits" value="24 hits in 1176 CRISPR screens"/>
</dbReference>
<dbReference type="ChiTaRS" id="THAP4">
    <property type="organism name" value="human"/>
</dbReference>
<dbReference type="EvolutionaryTrace" id="Q8WY91"/>
<dbReference type="GeneWiki" id="THAP4"/>
<dbReference type="GenomeRNAi" id="51078"/>
<dbReference type="Pharos" id="Q8WY91">
    <property type="development level" value="Tbio"/>
</dbReference>
<dbReference type="PRO" id="PR:Q8WY91"/>
<dbReference type="Proteomes" id="UP000005640">
    <property type="component" value="Chromosome 2"/>
</dbReference>
<dbReference type="RNAct" id="Q8WY91">
    <property type="molecule type" value="protein"/>
</dbReference>
<dbReference type="Bgee" id="ENSG00000176946">
    <property type="expression patterns" value="Expressed in apex of heart and 203 other cell types or tissues"/>
</dbReference>
<dbReference type="ExpressionAtlas" id="Q8WY91">
    <property type="expression patterns" value="baseline and differential"/>
</dbReference>
<dbReference type="GO" id="GO:0005829">
    <property type="term" value="C:cytosol"/>
    <property type="evidence" value="ECO:0000314"/>
    <property type="project" value="HPA"/>
</dbReference>
<dbReference type="GO" id="GO:0005654">
    <property type="term" value="C:nucleoplasm"/>
    <property type="evidence" value="ECO:0000314"/>
    <property type="project" value="HPA"/>
</dbReference>
<dbReference type="GO" id="GO:0003677">
    <property type="term" value="F:DNA binding"/>
    <property type="evidence" value="ECO:0007669"/>
    <property type="project" value="UniProtKB-KW"/>
</dbReference>
<dbReference type="GO" id="GO:0020037">
    <property type="term" value="F:heme binding"/>
    <property type="evidence" value="ECO:0000315"/>
    <property type="project" value="UniProtKB"/>
</dbReference>
<dbReference type="GO" id="GO:0042802">
    <property type="term" value="F:identical protein binding"/>
    <property type="evidence" value="ECO:0000353"/>
    <property type="project" value="UniProtKB"/>
</dbReference>
<dbReference type="GO" id="GO:0070026">
    <property type="term" value="F:nitric oxide binding"/>
    <property type="evidence" value="ECO:0000314"/>
    <property type="project" value="UniProtKB"/>
</dbReference>
<dbReference type="GO" id="GO:0062213">
    <property type="term" value="F:peroxynitrite isomerase activity"/>
    <property type="evidence" value="ECO:0000314"/>
    <property type="project" value="UniProtKB"/>
</dbReference>
<dbReference type="GO" id="GO:0008270">
    <property type="term" value="F:zinc ion binding"/>
    <property type="evidence" value="ECO:0007669"/>
    <property type="project" value="UniProtKB-KW"/>
</dbReference>
<dbReference type="GO" id="GO:0042126">
    <property type="term" value="P:nitrate metabolic process"/>
    <property type="evidence" value="ECO:0000314"/>
    <property type="project" value="UniProtKB"/>
</dbReference>
<dbReference type="GO" id="GO:0006570">
    <property type="term" value="P:tyrosine metabolic process"/>
    <property type="evidence" value="ECO:0000314"/>
    <property type="project" value="UniProtKB"/>
</dbReference>
<dbReference type="CDD" id="cd07828">
    <property type="entry name" value="lipocalin_heme-bd-THAP4-like"/>
    <property type="match status" value="1"/>
</dbReference>
<dbReference type="FunFam" id="2.40.128.20:FF:000014">
    <property type="entry name" value="THAP domain-containing protein 4 isoform X1"/>
    <property type="match status" value="1"/>
</dbReference>
<dbReference type="Gene3D" id="2.40.128.20">
    <property type="match status" value="1"/>
</dbReference>
<dbReference type="Gene3D" id="6.20.210.20">
    <property type="entry name" value="THAP domain"/>
    <property type="match status" value="1"/>
</dbReference>
<dbReference type="InterPro" id="IPR012674">
    <property type="entry name" value="Calycin"/>
</dbReference>
<dbReference type="InterPro" id="IPR045165">
    <property type="entry name" value="Nitrobindin"/>
</dbReference>
<dbReference type="InterPro" id="IPR014878">
    <property type="entry name" value="THAP4-like_heme-bd"/>
</dbReference>
<dbReference type="InterPro" id="IPR006612">
    <property type="entry name" value="THAP_Znf"/>
</dbReference>
<dbReference type="InterPro" id="IPR038441">
    <property type="entry name" value="THAP_Znf_sf"/>
</dbReference>
<dbReference type="PANTHER" id="PTHR15854:SF4">
    <property type="entry name" value="PEROXYNITRITE ISOMERASE THAP4"/>
    <property type="match status" value="1"/>
</dbReference>
<dbReference type="PANTHER" id="PTHR15854">
    <property type="entry name" value="THAP4 PROTEIN"/>
    <property type="match status" value="1"/>
</dbReference>
<dbReference type="Pfam" id="PF05485">
    <property type="entry name" value="THAP"/>
    <property type="match status" value="1"/>
</dbReference>
<dbReference type="Pfam" id="PF08768">
    <property type="entry name" value="THAP4_heme-bd"/>
    <property type="match status" value="1"/>
</dbReference>
<dbReference type="SMART" id="SM00692">
    <property type="entry name" value="DM3"/>
    <property type="match status" value="1"/>
</dbReference>
<dbReference type="SMART" id="SM00980">
    <property type="entry name" value="THAP"/>
    <property type="match status" value="1"/>
</dbReference>
<dbReference type="SUPFAM" id="SSF57716">
    <property type="entry name" value="Glucocorticoid receptor-like (DNA-binding domain)"/>
    <property type="match status" value="1"/>
</dbReference>
<dbReference type="SUPFAM" id="SSF50814">
    <property type="entry name" value="Lipocalins"/>
    <property type="match status" value="1"/>
</dbReference>
<dbReference type="PROSITE" id="PS50950">
    <property type="entry name" value="ZF_THAP"/>
    <property type="match status" value="1"/>
</dbReference>
<comment type="function">
    <text evidence="7 8">Heme-binding protein able to scavenge peroxynitrite and to protect free L-tyrosine against peroxynitrite-mediated nitration, by acting as a peroxynitrite isomerase that converts peroxynitrite to nitrate. Therefore, this protein likely plays a role in peroxynitrite sensing and in the detoxification of reactive nitrogen and oxygen species (RNS and ROS, respectively). Is able to bind nitric oxide (NO) in vitro, but may act as a sensor of peroxynitrite levels in vivo, possibly modulating the transcriptional activity residing in the N-terminal region.</text>
</comment>
<comment type="catalytic activity">
    <reaction evidence="7">
        <text>peroxynitrite = nitrate</text>
        <dbReference type="Rhea" id="RHEA:63116"/>
        <dbReference type="ChEBI" id="CHEBI:17632"/>
        <dbReference type="ChEBI" id="CHEBI:25941"/>
    </reaction>
    <physiologicalReaction direction="left-to-right" evidence="13">
        <dbReference type="Rhea" id="RHEA:63117"/>
    </physiologicalReaction>
</comment>
<comment type="cofactor">
    <cofactor evidence="6 8">
        <name>heme b</name>
        <dbReference type="ChEBI" id="CHEBI:60344"/>
    </cofactor>
    <text evidence="8">Binds 1 heme b group per subunit, that coordinates a highly solvent-exposed Fe(III) atom.</text>
</comment>
<comment type="pathway">
    <text evidence="13">Nitrogen metabolism.</text>
</comment>
<comment type="subunit">
    <text evidence="12">Homodimer.</text>
</comment>
<comment type="interaction">
    <interactant intactId="EBI-726691">
        <id>Q8WY91</id>
    </interactant>
    <interactant intactId="EBI-11522760">
        <id>Q6RW13-2</id>
        <label>AGTRAP</label>
    </interactant>
    <organismsDiffer>false</organismsDiffer>
    <experiments>3</experiments>
</comment>
<comment type="interaction">
    <interactant intactId="EBI-726691">
        <id>Q8WY91</id>
    </interactant>
    <interactant intactId="EBI-11957045">
        <id>Q9NVV5-2</id>
        <label>AIG1</label>
    </interactant>
    <organismsDiffer>false</organismsDiffer>
    <experiments>3</experiments>
</comment>
<comment type="interaction">
    <interactant intactId="EBI-726691">
        <id>Q8WY91</id>
    </interactant>
    <interactant intactId="EBI-6872827">
        <id>P17707</id>
        <label>AMD1</label>
    </interactant>
    <organismsDiffer>false</organismsDiffer>
    <experiments>3</experiments>
</comment>
<comment type="interaction">
    <interactant intactId="EBI-726691">
        <id>Q8WY91</id>
    </interactant>
    <interactant intactId="EBI-12109402">
        <id>Q86W74-2</id>
        <label>ANKRD46</label>
    </interactant>
    <organismsDiffer>false</organismsDiffer>
    <experiments>3</experiments>
</comment>
<comment type="interaction">
    <interactant intactId="EBI-726691">
        <id>Q8WY91</id>
    </interactant>
    <interactant intactId="EBI-7996695">
        <id>Q8WZ55</id>
        <label>BSND</label>
    </interactant>
    <organismsDiffer>false</organismsDiffer>
    <experiments>3</experiments>
</comment>
<comment type="interaction">
    <interactant intactId="EBI-726691">
        <id>Q8WY91</id>
    </interactant>
    <interactant intactId="EBI-9686780">
        <id>Q06432</id>
        <label>CACNG1</label>
    </interactant>
    <organismsDiffer>false</organismsDiffer>
    <experiments>3</experiments>
</comment>
<comment type="interaction">
    <interactant intactId="EBI-726691">
        <id>Q8WY91</id>
    </interactant>
    <interactant intactId="EBI-712921">
        <id>P60033</id>
        <label>CD81</label>
    </interactant>
    <organismsDiffer>false</organismsDiffer>
    <experiments>3</experiments>
</comment>
<comment type="interaction">
    <interactant intactId="EBI-726691">
        <id>Q8WY91</id>
    </interactant>
    <interactant intactId="EBI-11522780">
        <id>Q96DZ9-2</id>
        <label>CMTM5</label>
    </interactant>
    <organismsDiffer>false</organismsDiffer>
    <experiments>3</experiments>
</comment>
<comment type="interaction">
    <interactant intactId="EBI-726691">
        <id>Q8WY91</id>
    </interactant>
    <interactant intactId="EBI-2807956">
        <id>Q96FZ5</id>
        <label>CMTM7</label>
    </interactant>
    <organismsDiffer>false</organismsDiffer>
    <experiments>3</experiments>
</comment>
<comment type="interaction">
    <interactant intactId="EBI-726691">
        <id>Q8WY91</id>
    </interactant>
    <interactant intactId="EBI-12211159">
        <id>P29400-2</id>
        <label>COL4A5</label>
    </interactant>
    <organismsDiffer>false</organismsDiffer>
    <experiments>3</experiments>
</comment>
<comment type="interaction">
    <interactant intactId="EBI-726691">
        <id>Q8WY91</id>
    </interactant>
    <interactant intactId="EBI-7097057">
        <id>Q96FN4</id>
        <label>CPNE2</label>
    </interactant>
    <organismsDiffer>false</organismsDiffer>
    <experiments>6</experiments>
</comment>
<comment type="interaction">
    <interactant intactId="EBI-726691">
        <id>Q8WY91</id>
    </interactant>
    <interactant intactId="EBI-1752413">
        <id>P78329</id>
        <label>CYP4F2</label>
    </interactant>
    <organismsDiffer>false</organismsDiffer>
    <experiments>3</experiments>
</comment>
<comment type="interaction">
    <interactant intactId="EBI-726691">
        <id>Q8WY91</id>
    </interactant>
    <interactant intactId="EBI-12831978">
        <id>Q6ZPD8</id>
        <label>DGAT2L6</label>
    </interactant>
    <organismsDiffer>false</organismsDiffer>
    <experiments>3</experiments>
</comment>
<comment type="interaction">
    <interactant intactId="EBI-726691">
        <id>Q8WY91</id>
    </interactant>
    <interactant intactId="EBI-3918971">
        <id>Q9Y680</id>
        <label>FKBP7</label>
    </interactant>
    <organismsDiffer>false</organismsDiffer>
    <experiments>3</experiments>
</comment>
<comment type="interaction">
    <interactant intactId="EBI-726691">
        <id>Q8WY91</id>
    </interactant>
    <interactant intactId="EBI-11991950">
        <id>Q8WWP7</id>
        <label>GIMAP1</label>
    </interactant>
    <organismsDiffer>false</organismsDiffer>
    <experiments>3</experiments>
</comment>
<comment type="interaction">
    <interactant intactId="EBI-726691">
        <id>Q8WY91</id>
    </interactant>
    <interactant intactId="EBI-2927498">
        <id>O60883</id>
        <label>GPR37L1</label>
    </interactant>
    <organismsDiffer>false</organismsDiffer>
    <experiments>3</experiments>
</comment>
<comment type="interaction">
    <interactant intactId="EBI-726691">
        <id>Q8WY91</id>
    </interactant>
    <interactant intactId="EBI-720480">
        <id>P24593</id>
        <label>IGFBP5</label>
    </interactant>
    <organismsDiffer>false</organismsDiffer>
    <experiments>3</experiments>
</comment>
<comment type="interaction">
    <interactant intactId="EBI-726691">
        <id>Q8WY91</id>
    </interactant>
    <interactant intactId="EBI-8070286">
        <id>O43561-2</id>
        <label>LAT</label>
    </interactant>
    <organismsDiffer>false</organismsDiffer>
    <experiments>3</experiments>
</comment>
<comment type="interaction">
    <interactant intactId="EBI-726691">
        <id>Q8WY91</id>
    </interactant>
    <interactant intactId="EBI-12033434">
        <id>Q9UBY5</id>
        <label>LPAR3</label>
    </interactant>
    <organismsDiffer>false</organismsDiffer>
    <experiments>3</experiments>
</comment>
<comment type="interaction">
    <interactant intactId="EBI-726691">
        <id>Q8WY91</id>
    </interactant>
    <interactant intactId="EBI-944295">
        <id>Q969L2</id>
        <label>MAL2</label>
    </interactant>
    <organismsDiffer>false</organismsDiffer>
    <experiments>5</experiments>
</comment>
<comment type="interaction">
    <interactant intactId="EBI-726691">
        <id>Q8WY91</id>
    </interactant>
    <interactant intactId="EBI-2808234">
        <id>P11836</id>
        <label>MS4A1</label>
    </interactant>
    <organismsDiffer>false</organismsDiffer>
    <experiments>3</experiments>
</comment>
<comment type="interaction">
    <interactant intactId="EBI-726691">
        <id>Q8WY91</id>
    </interactant>
    <interactant intactId="EBI-11978907">
        <id>Q9ULP0-2</id>
        <label>NDRG4</label>
    </interactant>
    <organismsDiffer>false</organismsDiffer>
    <experiments>3</experiments>
</comment>
<comment type="interaction">
    <interactant intactId="EBI-726691">
        <id>Q8WY91</id>
    </interactant>
    <interactant intactId="EBI-608347">
        <id>Q04941</id>
        <label>PLP2</label>
    </interactant>
    <organismsDiffer>false</organismsDiffer>
    <experiments>3</experiments>
</comment>
<comment type="interaction">
    <interactant intactId="EBI-726691">
        <id>Q8WY91</id>
    </interactant>
    <interactant intactId="EBI-14210385">
        <id>Q59EV6</id>
        <label>PPGB</label>
    </interactant>
    <organismsDiffer>false</organismsDiffer>
    <experiments>3</experiments>
</comment>
<comment type="interaction">
    <interactant intactId="EBI-726691">
        <id>Q8WY91</id>
    </interactant>
    <interactant intactId="EBI-2806908">
        <id>Q96LZ7</id>
        <label>RMDN2</label>
    </interactant>
    <organismsDiffer>false</organismsDiffer>
    <experiments>3</experiments>
</comment>
<comment type="interaction">
    <interactant intactId="EBI-726691">
        <id>Q8WY91</id>
    </interactant>
    <interactant intactId="EBI-10244780">
        <id>Q5QGT7</id>
        <label>RTP2</label>
    </interactant>
    <organismsDiffer>false</organismsDiffer>
    <experiments>3</experiments>
</comment>
<comment type="interaction">
    <interactant intactId="EBI-726691">
        <id>Q8WY91</id>
    </interactant>
    <interactant intactId="EBI-954338">
        <id>O15126</id>
        <label>SCAMP1</label>
    </interactant>
    <organismsDiffer>false</organismsDiffer>
    <experiments>3</experiments>
</comment>
<comment type="interaction">
    <interactant intactId="EBI-726691">
        <id>Q8WY91</id>
    </interactant>
    <interactant intactId="EBI-10262251">
        <id>Q8IWU4</id>
        <label>SLC30A8</label>
    </interactant>
    <organismsDiffer>false</organismsDiffer>
    <experiments>3</experiments>
</comment>
<comment type="interaction">
    <interactant intactId="EBI-726691">
        <id>Q8WY91</id>
    </interactant>
    <interactant intactId="EBI-9071725">
        <id>P08247</id>
        <label>SYP</label>
    </interactant>
    <organismsDiffer>false</organismsDiffer>
    <experiments>3</experiments>
</comment>
<comment type="interaction">
    <interactant intactId="EBI-726691">
        <id>Q8WY91</id>
    </interactant>
    <interactant intactId="EBI-726691">
        <id>Q8WY91</id>
        <label>THAP4</label>
    </interactant>
    <organismsDiffer>false</organismsDiffer>
    <experiments>3</experiments>
</comment>
<comment type="interaction">
    <interactant intactId="EBI-726691">
        <id>Q8WY91</id>
    </interactant>
    <interactant intactId="EBI-12845616">
        <id>Q6UX40</id>
        <label>TMEM107</label>
    </interactant>
    <organismsDiffer>false</organismsDiffer>
    <experiments>3</experiments>
</comment>
<comment type="interaction">
    <interactant intactId="EBI-726691">
        <id>Q8WY91</id>
    </interactant>
    <interactant intactId="EBI-2852148">
        <id>Q9H2L4</id>
        <label>TMEM60</label>
    </interactant>
    <organismsDiffer>false</organismsDiffer>
    <experiments>3</experiments>
</comment>
<comment type="interaction">
    <interactant intactId="EBI-726691">
        <id>Q8WY91</id>
    </interactant>
    <interactant intactId="EBI-12015604">
        <id>Q8N2M4</id>
        <label>TMEM86A</label>
    </interactant>
    <organismsDiffer>false</organismsDiffer>
    <experiments>3</experiments>
</comment>
<comment type="interaction">
    <interactant intactId="EBI-726691">
        <id>Q8WY91</id>
    </interactant>
    <interactant intactId="EBI-2548832">
        <id>Q8N661</id>
        <label>TMEM86B</label>
    </interactant>
    <organismsDiffer>false</organismsDiffer>
    <experiments>3</experiments>
</comment>
<comment type="interaction">
    <interactant intactId="EBI-726691">
        <id>Q8WY91</id>
    </interactant>
    <interactant intactId="EBI-1044859">
        <id>Q9UBN6</id>
        <label>TNFRSF10D</label>
    </interactant>
    <organismsDiffer>false</organismsDiffer>
    <experiments>3</experiments>
</comment>
<comment type="interaction">
    <interactant intactId="EBI-726691">
        <id>Q8WY91</id>
    </interactant>
    <interactant intactId="EBI-12124194">
        <id>P55327-2</id>
        <label>TPD52</label>
    </interactant>
    <organismsDiffer>false</organismsDiffer>
    <experiments>3</experiments>
</comment>
<comment type="interaction">
    <interactant intactId="EBI-726691">
        <id>Q8WY91</id>
    </interactant>
    <interactant intactId="EBI-10210710">
        <id>P49638</id>
        <label>TTPA</label>
    </interactant>
    <organismsDiffer>false</organismsDiffer>
    <experiments>3</experiments>
</comment>
<comment type="interaction">
    <interactant intactId="EBI-726691">
        <id>Q8WY91</id>
    </interactant>
    <interactant intactId="EBI-751210">
        <id>Q96EC8</id>
        <label>YIPF6</label>
    </interactant>
    <organismsDiffer>false</organismsDiffer>
    <experiments>3</experiments>
</comment>
<comment type="subcellular location">
    <subcellularLocation>
        <location>Cytoplasm</location>
    </subcellularLocation>
    <subcellularLocation>
        <location>Nucleus</location>
    </subcellularLocation>
    <text evidence="8">Localizes mainly in the cytoplasm and partially in the nucleus.</text>
</comment>
<comment type="alternative products">
    <event type="alternative splicing"/>
    <isoform>
        <id>Q8WY91-1</id>
        <name>1</name>
        <sequence type="displayed"/>
    </isoform>
    <isoform>
        <id>Q8WY91-2</id>
        <name>2</name>
        <sequence type="described" ref="VSP_020078 VSP_020079"/>
    </isoform>
</comment>
<comment type="domain">
    <text evidence="6 7">The C-terminal nitrobindin region coordinates a heme and bears the isomerase activity. The N-terminal zinc finger domain likely binds DNA and may be involved in transcriptional regulation.</text>
</comment>
<comment type="similarity">
    <text evidence="11">In the C-terminal section; belongs to the nitrobindin family.</text>
</comment>
<comment type="sequence caution" evidence="11">
    <conflict type="erroneous initiation">
        <sequence resource="EMBL-CDS" id="AAH00247"/>
    </conflict>
    <text>Truncated N-terminus.</text>
</comment>
<comment type="sequence caution" evidence="11">
    <conflict type="erroneous initiation">
        <sequence resource="EMBL-CDS" id="AAH09439"/>
    </conflict>
    <text>Truncated N-terminus.</text>
</comment>
<comment type="sequence caution" evidence="11">
    <conflict type="erroneous initiation">
        <sequence resource="EMBL-CDS" id="BAA91560"/>
    </conflict>
    <text>Truncated N-terminus.</text>
</comment>
<gene>
    <name evidence="14" type="primary">THAP4</name>
    <name type="ORF">CGI-36</name>
    <name type="ORF">PP238</name>
</gene>
<organism>
    <name type="scientific">Homo sapiens</name>
    <name type="common">Human</name>
    <dbReference type="NCBI Taxonomy" id="9606"/>
    <lineage>
        <taxon>Eukaryota</taxon>
        <taxon>Metazoa</taxon>
        <taxon>Chordata</taxon>
        <taxon>Craniata</taxon>
        <taxon>Vertebrata</taxon>
        <taxon>Euteleostomi</taxon>
        <taxon>Mammalia</taxon>
        <taxon>Eutheria</taxon>
        <taxon>Euarchontoglires</taxon>
        <taxon>Primates</taxon>
        <taxon>Haplorrhini</taxon>
        <taxon>Catarrhini</taxon>
        <taxon>Hominidae</taxon>
        <taxon>Homo</taxon>
    </lineage>
</organism>
<protein>
    <recommendedName>
        <fullName evidence="13">Peroxynitrite isomerase THAP4</fullName>
        <ecNumber evidence="7">5.99.-.-</ecNumber>
    </recommendedName>
    <alternativeName>
        <fullName evidence="10">Ferric Homo sapiens nitrobindin</fullName>
        <shortName evidence="10">Hs-Nb(III)</shortName>
    </alternativeName>
    <alternativeName>
        <fullName evidence="14">THAP domain-containing protein 4</fullName>
    </alternativeName>
</protein>